<name>EXO70_YARLI</name>
<protein>
    <recommendedName>
        <fullName>Exocyst complex protein EXO70</fullName>
    </recommendedName>
</protein>
<reference key="1">
    <citation type="journal article" date="2004" name="Nature">
        <title>Genome evolution in yeasts.</title>
        <authorList>
            <person name="Dujon B."/>
            <person name="Sherman D."/>
            <person name="Fischer G."/>
            <person name="Durrens P."/>
            <person name="Casaregola S."/>
            <person name="Lafontaine I."/>
            <person name="de Montigny J."/>
            <person name="Marck C."/>
            <person name="Neuveglise C."/>
            <person name="Talla E."/>
            <person name="Goffard N."/>
            <person name="Frangeul L."/>
            <person name="Aigle M."/>
            <person name="Anthouard V."/>
            <person name="Babour A."/>
            <person name="Barbe V."/>
            <person name="Barnay S."/>
            <person name="Blanchin S."/>
            <person name="Beckerich J.-M."/>
            <person name="Beyne E."/>
            <person name="Bleykasten C."/>
            <person name="Boisrame A."/>
            <person name="Boyer J."/>
            <person name="Cattolico L."/>
            <person name="Confanioleri F."/>
            <person name="de Daruvar A."/>
            <person name="Despons L."/>
            <person name="Fabre E."/>
            <person name="Fairhead C."/>
            <person name="Ferry-Dumazet H."/>
            <person name="Groppi A."/>
            <person name="Hantraye F."/>
            <person name="Hennequin C."/>
            <person name="Jauniaux N."/>
            <person name="Joyet P."/>
            <person name="Kachouri R."/>
            <person name="Kerrest A."/>
            <person name="Koszul R."/>
            <person name="Lemaire M."/>
            <person name="Lesur I."/>
            <person name="Ma L."/>
            <person name="Muller H."/>
            <person name="Nicaud J.-M."/>
            <person name="Nikolski M."/>
            <person name="Oztas S."/>
            <person name="Ozier-Kalogeropoulos O."/>
            <person name="Pellenz S."/>
            <person name="Potier S."/>
            <person name="Richard G.-F."/>
            <person name="Straub M.-L."/>
            <person name="Suleau A."/>
            <person name="Swennen D."/>
            <person name="Tekaia F."/>
            <person name="Wesolowski-Louvel M."/>
            <person name="Westhof E."/>
            <person name="Wirth B."/>
            <person name="Zeniou-Meyer M."/>
            <person name="Zivanovic Y."/>
            <person name="Bolotin-Fukuhara M."/>
            <person name="Thierry A."/>
            <person name="Bouchier C."/>
            <person name="Caudron B."/>
            <person name="Scarpelli C."/>
            <person name="Gaillardin C."/>
            <person name="Weissenbach J."/>
            <person name="Wincker P."/>
            <person name="Souciet J.-L."/>
        </authorList>
    </citation>
    <scope>NUCLEOTIDE SEQUENCE [LARGE SCALE GENOMIC DNA]</scope>
    <source>
        <strain>CLIB 122 / E 150</strain>
    </source>
</reference>
<proteinExistence type="inferred from homology"/>
<evidence type="ECO:0000250" key="1"/>
<evidence type="ECO:0000305" key="2"/>
<keyword id="KW-0268">Exocytosis</keyword>
<keyword id="KW-0653">Protein transport</keyword>
<keyword id="KW-1185">Reference proteome</keyword>
<keyword id="KW-0813">Transport</keyword>
<organism>
    <name type="scientific">Yarrowia lipolytica (strain CLIB 122 / E 150)</name>
    <name type="common">Yeast</name>
    <name type="synonym">Candida lipolytica</name>
    <dbReference type="NCBI Taxonomy" id="284591"/>
    <lineage>
        <taxon>Eukaryota</taxon>
        <taxon>Fungi</taxon>
        <taxon>Dikarya</taxon>
        <taxon>Ascomycota</taxon>
        <taxon>Saccharomycotina</taxon>
        <taxon>Dipodascomycetes</taxon>
        <taxon>Dipodascales</taxon>
        <taxon>Dipodascales incertae sedis</taxon>
        <taxon>Yarrowia</taxon>
    </lineage>
</organism>
<dbReference type="EMBL" id="CR382129">
    <property type="protein sequence ID" value="CAG82052.1"/>
    <property type="molecule type" value="Genomic_DNA"/>
</dbReference>
<dbReference type="RefSeq" id="XP_501742.1">
    <property type="nucleotide sequence ID" value="XM_501742.1"/>
</dbReference>
<dbReference type="SMR" id="Q6CC70"/>
<dbReference type="FunCoup" id="Q6CC70">
    <property type="interactions" value="121"/>
</dbReference>
<dbReference type="STRING" id="284591.Q6CC70"/>
<dbReference type="EnsemblFungi" id="CAG82052">
    <property type="protein sequence ID" value="CAG82052"/>
    <property type="gene ID" value="YALI0_C11946g"/>
</dbReference>
<dbReference type="KEGG" id="yli:2909275"/>
<dbReference type="VEuPathDB" id="FungiDB:YALI0_C11946g"/>
<dbReference type="HOGENOM" id="CLU_010236_4_2_1"/>
<dbReference type="InParanoid" id="Q6CC70"/>
<dbReference type="OMA" id="GIIRAGP"/>
<dbReference type="OrthoDB" id="110682at4891"/>
<dbReference type="Proteomes" id="UP000001300">
    <property type="component" value="Chromosome C"/>
</dbReference>
<dbReference type="GO" id="GO:0005935">
    <property type="term" value="C:cellular bud neck"/>
    <property type="evidence" value="ECO:0007669"/>
    <property type="project" value="UniProtKB-SubCell"/>
</dbReference>
<dbReference type="GO" id="GO:0000145">
    <property type="term" value="C:exocyst"/>
    <property type="evidence" value="ECO:0000318"/>
    <property type="project" value="GO_Central"/>
</dbReference>
<dbReference type="GO" id="GO:0005546">
    <property type="term" value="F:phosphatidylinositol-4,5-bisphosphate binding"/>
    <property type="evidence" value="ECO:0007669"/>
    <property type="project" value="InterPro"/>
</dbReference>
<dbReference type="GO" id="GO:0006887">
    <property type="term" value="P:exocytosis"/>
    <property type="evidence" value="ECO:0000318"/>
    <property type="project" value="GO_Central"/>
</dbReference>
<dbReference type="GO" id="GO:0015031">
    <property type="term" value="P:protein transport"/>
    <property type="evidence" value="ECO:0007669"/>
    <property type="project" value="UniProtKB-KW"/>
</dbReference>
<dbReference type="Gene3D" id="1.10.357.60">
    <property type="match status" value="1"/>
</dbReference>
<dbReference type="Gene3D" id="1.20.1310.30">
    <property type="match status" value="1"/>
</dbReference>
<dbReference type="Gene3D" id="1.20.58.1150">
    <property type="match status" value="1"/>
</dbReference>
<dbReference type="Gene3D" id="1.20.1280.170">
    <property type="entry name" value="Exocyst complex component Exo70"/>
    <property type="match status" value="1"/>
</dbReference>
<dbReference type="InterPro" id="IPR016159">
    <property type="entry name" value="Cullin_repeat-like_dom_sf"/>
</dbReference>
<dbReference type="InterPro" id="IPR004140">
    <property type="entry name" value="Exo70"/>
</dbReference>
<dbReference type="InterPro" id="IPR046364">
    <property type="entry name" value="Exo70_C"/>
</dbReference>
<dbReference type="PANTHER" id="PTHR12542:SF41">
    <property type="entry name" value="EXOCYST COMPLEX COMPONENT 7"/>
    <property type="match status" value="1"/>
</dbReference>
<dbReference type="PANTHER" id="PTHR12542">
    <property type="entry name" value="EXOCYST COMPLEX PROTEIN EXO70"/>
    <property type="match status" value="1"/>
</dbReference>
<dbReference type="Pfam" id="PF03081">
    <property type="entry name" value="Exo70_C"/>
    <property type="match status" value="1"/>
</dbReference>
<dbReference type="Pfam" id="PF20669">
    <property type="entry name" value="Exo70_N"/>
    <property type="match status" value="1"/>
</dbReference>
<dbReference type="SUPFAM" id="SSF74788">
    <property type="entry name" value="Cullin repeat-like"/>
    <property type="match status" value="1"/>
</dbReference>
<accession>Q6CC70</accession>
<sequence length="603" mass="67816">MSLRPDEVDVRILEENLLKTNTLVESMVASCQKISNSSYKAEITIEPISGMQRRMQVYETNLNNCLKVVDGIRDYAKVTAREEKIIRQGPEAVGLPAYVAAIQSVIRVNDEIEQRKLHSIPKVKEKAVDLARMGTSGLKENLATILKEESNPIDPVPILASGKPFPLMSPKNADKLNELMGIVARFSARQDNTYVDSRSRYLAMSLSPVASKVKPTVRTGKAPYDKQSNGIHIYAEALLKMLQAEHDNLRCAFPKDEARVKQYFTQLAQTPLQTYQAAGEEISNHVQRNISTDALLIFELIEGTVALKRGLEPLTNSAAPLDRLIQSSYNVSQGVFTEILKICEARVQQVMTLPSDNGVCDATVEVMSRIRRFAEYKDSAVLAISGMKYQQWIPQPRPAWMSTFSSAPAGYTTTKPQELLSAVFSDSIDAFYVTLEMKAKQLNPKKPSQVGFFLLTNLTLIERFVTKSEVYKVLGGQGRERLEKLRKRGLNLFLEGWKATASLLMDTTVVNSKGSLSSKDRELVKDKFKTFNADFEELVKNHKTYTITDPALKQLLAKEVAFICPLYHRYYDKHIGGDFSKNVDKYIKYDKAQFDRVLQELGD</sequence>
<feature type="chain" id="PRO_0000118974" description="Exocyst complex protein EXO70">
    <location>
        <begin position="1"/>
        <end position="603"/>
    </location>
</feature>
<comment type="function">
    <text evidence="1">Involved in the secretory pathway as part of the exocyst complex which tethers secretory vesicles to the sites of exocytosis. Also plays a role in the assembly of the exocyst (By similarity).</text>
</comment>
<comment type="subcellular location">
    <subcellularLocation>
        <location evidence="1">Bud</location>
    </subcellularLocation>
    <subcellularLocation>
        <location evidence="1">Bud neck</location>
    </subcellularLocation>
</comment>
<comment type="similarity">
    <text evidence="2">Belongs to the EXO70 family.</text>
</comment>
<gene>
    <name type="primary">EXO70</name>
    <name type="ordered locus">YALI0C11946g</name>
</gene>